<protein>
    <recommendedName>
        <fullName evidence="1">Ribosome-binding factor A</fullName>
    </recommendedName>
</protein>
<evidence type="ECO:0000255" key="1">
    <source>
        <dbReference type="HAMAP-Rule" id="MF_00003"/>
    </source>
</evidence>
<keyword id="KW-0963">Cytoplasm</keyword>
<keyword id="KW-1185">Reference proteome</keyword>
<keyword id="KW-0690">Ribosome biogenesis</keyword>
<comment type="function">
    <text evidence="1">One of several proteins that assist in the late maturation steps of the functional core of the 30S ribosomal subunit. Associates with free 30S ribosomal subunits (but not with 30S subunits that are part of 70S ribosomes or polysomes). Required for efficient processing of 16S rRNA. May interact with the 5'-terminal helix region of 16S rRNA.</text>
</comment>
<comment type="subunit">
    <text evidence="1">Monomer. Binds 30S ribosomal subunits, but not 50S ribosomal subunits or 70S ribosomes.</text>
</comment>
<comment type="subcellular location">
    <subcellularLocation>
        <location evidence="1">Cytoplasm</location>
    </subcellularLocation>
</comment>
<comment type="similarity">
    <text evidence="1">Belongs to the RbfA family.</text>
</comment>
<proteinExistence type="inferred from homology"/>
<name>RBFA_ALBFT</name>
<accession>Q21WJ4</accession>
<dbReference type="EMBL" id="CP000267">
    <property type="protein sequence ID" value="ABD69859.1"/>
    <property type="molecule type" value="Genomic_DNA"/>
</dbReference>
<dbReference type="SMR" id="Q21WJ4"/>
<dbReference type="STRING" id="338969.Rfer_2135"/>
<dbReference type="KEGG" id="rfr:Rfer_2135"/>
<dbReference type="eggNOG" id="COG0858">
    <property type="taxonomic scope" value="Bacteria"/>
</dbReference>
<dbReference type="HOGENOM" id="CLU_089475_5_1_4"/>
<dbReference type="Proteomes" id="UP000008332">
    <property type="component" value="Chromosome"/>
</dbReference>
<dbReference type="GO" id="GO:0005829">
    <property type="term" value="C:cytosol"/>
    <property type="evidence" value="ECO:0007669"/>
    <property type="project" value="TreeGrafter"/>
</dbReference>
<dbReference type="GO" id="GO:0043024">
    <property type="term" value="F:ribosomal small subunit binding"/>
    <property type="evidence" value="ECO:0007669"/>
    <property type="project" value="TreeGrafter"/>
</dbReference>
<dbReference type="GO" id="GO:0030490">
    <property type="term" value="P:maturation of SSU-rRNA"/>
    <property type="evidence" value="ECO:0007669"/>
    <property type="project" value="UniProtKB-UniRule"/>
</dbReference>
<dbReference type="Gene3D" id="3.30.300.20">
    <property type="match status" value="1"/>
</dbReference>
<dbReference type="HAMAP" id="MF_00003">
    <property type="entry name" value="RbfA"/>
    <property type="match status" value="1"/>
</dbReference>
<dbReference type="InterPro" id="IPR015946">
    <property type="entry name" value="KH_dom-like_a/b"/>
</dbReference>
<dbReference type="InterPro" id="IPR000238">
    <property type="entry name" value="RbfA"/>
</dbReference>
<dbReference type="InterPro" id="IPR023799">
    <property type="entry name" value="RbfA_dom_sf"/>
</dbReference>
<dbReference type="NCBIfam" id="TIGR00082">
    <property type="entry name" value="rbfA"/>
    <property type="match status" value="1"/>
</dbReference>
<dbReference type="PANTHER" id="PTHR33515">
    <property type="entry name" value="RIBOSOME-BINDING FACTOR A, CHLOROPLASTIC-RELATED"/>
    <property type="match status" value="1"/>
</dbReference>
<dbReference type="PANTHER" id="PTHR33515:SF1">
    <property type="entry name" value="RIBOSOME-BINDING FACTOR A, CHLOROPLASTIC-RELATED"/>
    <property type="match status" value="1"/>
</dbReference>
<dbReference type="Pfam" id="PF02033">
    <property type="entry name" value="RBFA"/>
    <property type="match status" value="1"/>
</dbReference>
<dbReference type="SUPFAM" id="SSF89919">
    <property type="entry name" value="Ribosome-binding factor A, RbfA"/>
    <property type="match status" value="1"/>
</dbReference>
<reference key="1">
    <citation type="submission" date="2006-02" db="EMBL/GenBank/DDBJ databases">
        <title>Complete sequence of chromosome of Rhodoferax ferrireducens DSM 15236.</title>
        <authorList>
            <person name="Copeland A."/>
            <person name="Lucas S."/>
            <person name="Lapidus A."/>
            <person name="Barry K."/>
            <person name="Detter J.C."/>
            <person name="Glavina del Rio T."/>
            <person name="Hammon N."/>
            <person name="Israni S."/>
            <person name="Pitluck S."/>
            <person name="Brettin T."/>
            <person name="Bruce D."/>
            <person name="Han C."/>
            <person name="Tapia R."/>
            <person name="Gilna P."/>
            <person name="Kiss H."/>
            <person name="Schmutz J."/>
            <person name="Larimer F."/>
            <person name="Land M."/>
            <person name="Kyrpides N."/>
            <person name="Ivanova N."/>
            <person name="Richardson P."/>
        </authorList>
    </citation>
    <scope>NUCLEOTIDE SEQUENCE [LARGE SCALE GENOMIC DNA]</scope>
    <source>
        <strain>ATCC BAA-621 / DSM 15236 / T118</strain>
    </source>
</reference>
<feature type="chain" id="PRO_1000000188" description="Ribosome-binding factor A">
    <location>
        <begin position="1"/>
        <end position="122"/>
    </location>
</feature>
<gene>
    <name evidence="1" type="primary">rbfA</name>
    <name type="ordered locus">Rfer_2135</name>
</gene>
<organism>
    <name type="scientific">Albidiferax ferrireducens (strain ATCC BAA-621 / DSM 15236 / T118)</name>
    <name type="common">Rhodoferax ferrireducens</name>
    <dbReference type="NCBI Taxonomy" id="338969"/>
    <lineage>
        <taxon>Bacteria</taxon>
        <taxon>Pseudomonadati</taxon>
        <taxon>Pseudomonadota</taxon>
        <taxon>Betaproteobacteria</taxon>
        <taxon>Burkholderiales</taxon>
        <taxon>Comamonadaceae</taxon>
        <taxon>Rhodoferax</taxon>
    </lineage>
</organism>
<sequence length="122" mass="13605">MRKKSKTPNRAFKVADQIQRDLTELIARELKDPRVGMVTIQAVEVTPDYAHAKVYFSLLAGDPKACTEGLNQAAGFLRAGLFKRLHIHTVPTLHFLFDQTTERAADMNALIARAVASRAKED</sequence>